<accession>P39714</accession>
<accession>D6VPF9</accession>
<accession>E9P8Z3</accession>
<evidence type="ECO:0000250" key="1"/>
<evidence type="ECO:0000269" key="2">
    <source>
    </source>
</evidence>
<evidence type="ECO:0000269" key="3">
    <source>
    </source>
</evidence>
<evidence type="ECO:0000269" key="4">
    <source>
    </source>
</evidence>
<evidence type="ECO:0000305" key="5"/>
<evidence type="ECO:0007744" key="6">
    <source>
    </source>
</evidence>
<gene>
    <name type="primary">BDH1</name>
    <name type="synonym">BDH</name>
    <name type="ordered locus">YAL060W</name>
    <name type="ORF">FUN49</name>
</gene>
<proteinExistence type="evidence at protein level"/>
<keyword id="KW-0963">Cytoplasm</keyword>
<keyword id="KW-0479">Metal-binding</keyword>
<keyword id="KW-0520">NAD</keyword>
<keyword id="KW-0560">Oxidoreductase</keyword>
<keyword id="KW-0597">Phosphoprotein</keyword>
<keyword id="KW-1185">Reference proteome</keyword>
<keyword id="KW-0862">Zinc</keyword>
<feature type="chain" id="PRO_0000160788" description="(R,R)-butanediol dehydrogenase">
    <location>
        <begin position="1"/>
        <end position="382"/>
    </location>
</feature>
<feature type="binding site" evidence="1">
    <location>
        <position position="39"/>
    </location>
    <ligand>
        <name>Zn(2+)</name>
        <dbReference type="ChEBI" id="CHEBI:29105"/>
        <label>1</label>
        <note>catalytic</note>
    </ligand>
</feature>
<feature type="binding site" evidence="1">
    <location>
        <position position="73"/>
    </location>
    <ligand>
        <name>Zn(2+)</name>
        <dbReference type="ChEBI" id="CHEBI:29105"/>
        <label>1</label>
        <note>catalytic</note>
    </ligand>
</feature>
<feature type="binding site" evidence="1">
    <location>
        <position position="103"/>
    </location>
    <ligand>
        <name>Zn(2+)</name>
        <dbReference type="ChEBI" id="CHEBI:29105"/>
        <label>2</label>
    </ligand>
</feature>
<feature type="binding site" evidence="1">
    <location>
        <position position="120"/>
    </location>
    <ligand>
        <name>Zn(2+)</name>
        <dbReference type="ChEBI" id="CHEBI:29105"/>
        <label>2</label>
    </ligand>
</feature>
<feature type="binding site" evidence="1">
    <location>
        <position position="123"/>
    </location>
    <ligand>
        <name>Zn(2+)</name>
        <dbReference type="ChEBI" id="CHEBI:29105"/>
        <label>2</label>
    </ligand>
</feature>
<feature type="binding site" evidence="1">
    <location>
        <position position="131"/>
    </location>
    <ligand>
        <name>Zn(2+)</name>
        <dbReference type="ChEBI" id="CHEBI:29105"/>
        <label>2</label>
    </ligand>
</feature>
<feature type="binding site" evidence="1">
    <location>
        <position position="173"/>
    </location>
    <ligand>
        <name>Zn(2+)</name>
        <dbReference type="ChEBI" id="CHEBI:29105"/>
        <label>1</label>
        <note>catalytic</note>
    </ligand>
</feature>
<feature type="modified residue" description="Phosphoserine" evidence="6">
    <location>
        <position position="63"/>
    </location>
</feature>
<feature type="sequence conflict" description="In Ref. 1; AAC04974." evidence="5" ref="1">
    <original>D</original>
    <variation>A</variation>
    <location>
        <position position="322"/>
    </location>
</feature>
<dbReference type="EC" id="1.1.1.4"/>
<dbReference type="EMBL" id="U12980">
    <property type="protein sequence ID" value="AAC04974.1"/>
    <property type="molecule type" value="Genomic_DNA"/>
</dbReference>
<dbReference type="EMBL" id="AY692922">
    <property type="protein sequence ID" value="AAT92941.1"/>
    <property type="molecule type" value="Genomic_DNA"/>
</dbReference>
<dbReference type="EMBL" id="BK006935">
    <property type="protein sequence ID" value="DAA06929.2"/>
    <property type="molecule type" value="Genomic_DNA"/>
</dbReference>
<dbReference type="PIR" id="S51962">
    <property type="entry name" value="S51962"/>
</dbReference>
<dbReference type="RefSeq" id="NP_009341.2">
    <property type="nucleotide sequence ID" value="NM_001178202.2"/>
</dbReference>
<dbReference type="SMR" id="P39714"/>
<dbReference type="BioGRID" id="31770">
    <property type="interactions" value="56"/>
</dbReference>
<dbReference type="DIP" id="DIP-5356N"/>
<dbReference type="FunCoup" id="P39714">
    <property type="interactions" value="130"/>
</dbReference>
<dbReference type="IntAct" id="P39714">
    <property type="interactions" value="2"/>
</dbReference>
<dbReference type="MINT" id="P39714"/>
<dbReference type="STRING" id="4932.YAL060W"/>
<dbReference type="CarbonylDB" id="P39714"/>
<dbReference type="iPTMnet" id="P39714"/>
<dbReference type="PaxDb" id="4932-YAL060W"/>
<dbReference type="PeptideAtlas" id="P39714"/>
<dbReference type="EnsemblFungi" id="YAL060W_mRNA">
    <property type="protein sequence ID" value="YAL060W"/>
    <property type="gene ID" value="YAL060W"/>
</dbReference>
<dbReference type="GeneID" id="851239"/>
<dbReference type="KEGG" id="sce:YAL060W"/>
<dbReference type="AGR" id="SGD:S000000056"/>
<dbReference type="SGD" id="S000000056">
    <property type="gene designation" value="BDH1"/>
</dbReference>
<dbReference type="VEuPathDB" id="FungiDB:YAL060W"/>
<dbReference type="eggNOG" id="KOG0024">
    <property type="taxonomic scope" value="Eukaryota"/>
</dbReference>
<dbReference type="GeneTree" id="ENSGT00940000176805"/>
<dbReference type="HOGENOM" id="CLU_026673_11_0_1"/>
<dbReference type="InParanoid" id="P39714"/>
<dbReference type="OMA" id="AMGHEMS"/>
<dbReference type="OrthoDB" id="5363962at2759"/>
<dbReference type="BioCyc" id="MetaCyc:YAL060W-MONOMER"/>
<dbReference type="BioCyc" id="YEAST:YAL060W-MONOMER"/>
<dbReference type="BRENDA" id="1.1.1.303">
    <property type="organism ID" value="984"/>
</dbReference>
<dbReference type="BRENDA" id="1.1.1.4">
    <property type="organism ID" value="984"/>
</dbReference>
<dbReference type="SABIO-RK" id="P39714"/>
<dbReference type="BioGRID-ORCS" id="851239">
    <property type="hits" value="1 hit in 10 CRISPR screens"/>
</dbReference>
<dbReference type="PRO" id="PR:P39714"/>
<dbReference type="Proteomes" id="UP000002311">
    <property type="component" value="Chromosome I"/>
</dbReference>
<dbReference type="RNAct" id="P39714">
    <property type="molecule type" value="protein"/>
</dbReference>
<dbReference type="GO" id="GO:0005737">
    <property type="term" value="C:cytoplasm"/>
    <property type="evidence" value="ECO:0007005"/>
    <property type="project" value="SGD"/>
</dbReference>
<dbReference type="GO" id="GO:0000721">
    <property type="term" value="F:(R,R)-butanediol dehydrogenase activity"/>
    <property type="evidence" value="ECO:0000314"/>
    <property type="project" value="SGD"/>
</dbReference>
<dbReference type="GO" id="GO:0008270">
    <property type="term" value="F:zinc ion binding"/>
    <property type="evidence" value="ECO:0007669"/>
    <property type="project" value="InterPro"/>
</dbReference>
<dbReference type="GO" id="GO:0006066">
    <property type="term" value="P:alcohol metabolic process"/>
    <property type="evidence" value="ECO:0000315"/>
    <property type="project" value="SGD"/>
</dbReference>
<dbReference type="GO" id="GO:0034079">
    <property type="term" value="P:butanediol biosynthetic process"/>
    <property type="evidence" value="ECO:0000315"/>
    <property type="project" value="SGD"/>
</dbReference>
<dbReference type="CDD" id="cd08233">
    <property type="entry name" value="butanediol_DH_like"/>
    <property type="match status" value="1"/>
</dbReference>
<dbReference type="FunFam" id="3.90.180.10:FF:000031">
    <property type="entry name" value="(R,R)-butanediol dehydrogenase"/>
    <property type="match status" value="1"/>
</dbReference>
<dbReference type="FunFam" id="3.40.50.720:FF:000068">
    <property type="entry name" value="Sorbitol dehydrogenase"/>
    <property type="match status" value="1"/>
</dbReference>
<dbReference type="Gene3D" id="3.90.180.10">
    <property type="entry name" value="Medium-chain alcohol dehydrogenases, catalytic domain"/>
    <property type="match status" value="1"/>
</dbReference>
<dbReference type="Gene3D" id="3.40.50.720">
    <property type="entry name" value="NAD(P)-binding Rossmann-like Domain"/>
    <property type="match status" value="1"/>
</dbReference>
<dbReference type="InterPro" id="IPR013149">
    <property type="entry name" value="ADH-like_C"/>
</dbReference>
<dbReference type="InterPro" id="IPR013154">
    <property type="entry name" value="ADH-like_N"/>
</dbReference>
<dbReference type="InterPro" id="IPR002328">
    <property type="entry name" value="ADH_Zn_CS"/>
</dbReference>
<dbReference type="InterPro" id="IPR011032">
    <property type="entry name" value="GroES-like_sf"/>
</dbReference>
<dbReference type="InterPro" id="IPR036291">
    <property type="entry name" value="NAD(P)-bd_dom_sf"/>
</dbReference>
<dbReference type="PANTHER" id="PTHR43161:SF23">
    <property type="entry name" value="(R,R)-BUTANEDIOL DEHYDROGENASE-RELATED"/>
    <property type="match status" value="1"/>
</dbReference>
<dbReference type="PANTHER" id="PTHR43161">
    <property type="entry name" value="SORBITOL DEHYDROGENASE"/>
    <property type="match status" value="1"/>
</dbReference>
<dbReference type="Pfam" id="PF08240">
    <property type="entry name" value="ADH_N"/>
    <property type="match status" value="1"/>
</dbReference>
<dbReference type="Pfam" id="PF00107">
    <property type="entry name" value="ADH_zinc_N"/>
    <property type="match status" value="1"/>
</dbReference>
<dbReference type="SUPFAM" id="SSF50129">
    <property type="entry name" value="GroES-like"/>
    <property type="match status" value="1"/>
</dbReference>
<dbReference type="SUPFAM" id="SSF51735">
    <property type="entry name" value="NAD(P)-binding Rossmann-fold domains"/>
    <property type="match status" value="1"/>
</dbReference>
<dbReference type="PROSITE" id="PS00059">
    <property type="entry name" value="ADH_ZINC"/>
    <property type="match status" value="1"/>
</dbReference>
<organism>
    <name type="scientific">Saccharomyces cerevisiae (strain ATCC 204508 / S288c)</name>
    <name type="common">Baker's yeast</name>
    <dbReference type="NCBI Taxonomy" id="559292"/>
    <lineage>
        <taxon>Eukaryota</taxon>
        <taxon>Fungi</taxon>
        <taxon>Dikarya</taxon>
        <taxon>Ascomycota</taxon>
        <taxon>Saccharomycotina</taxon>
        <taxon>Saccharomycetes</taxon>
        <taxon>Saccharomycetales</taxon>
        <taxon>Saccharomycetaceae</taxon>
        <taxon>Saccharomyces</taxon>
    </lineage>
</organism>
<reference key="1">
    <citation type="journal article" date="1995" name="Proc. Natl. Acad. Sci. U.S.A.">
        <title>The nucleotide sequence of chromosome I from Saccharomyces cerevisiae.</title>
        <authorList>
            <person name="Bussey H."/>
            <person name="Kaback D.B."/>
            <person name="Zhong W.-W."/>
            <person name="Vo D.H."/>
            <person name="Clark M.W."/>
            <person name="Fortin N."/>
            <person name="Hall J."/>
            <person name="Ouellette B.F.F."/>
            <person name="Keng T."/>
            <person name="Barton A.B."/>
            <person name="Su Y."/>
            <person name="Davies C.J."/>
            <person name="Storms R.K."/>
        </authorList>
    </citation>
    <scope>NUCLEOTIDE SEQUENCE [LARGE SCALE GENOMIC DNA]</scope>
    <source>
        <strain>ATCC 204508 / S288c</strain>
    </source>
</reference>
<reference key="2">
    <citation type="journal article" date="2014" name="G3 (Bethesda)">
        <title>The reference genome sequence of Saccharomyces cerevisiae: Then and now.</title>
        <authorList>
            <person name="Engel S.R."/>
            <person name="Dietrich F.S."/>
            <person name="Fisk D.G."/>
            <person name="Binkley G."/>
            <person name="Balakrishnan R."/>
            <person name="Costanzo M.C."/>
            <person name="Dwight S.S."/>
            <person name="Hitz B.C."/>
            <person name="Karra K."/>
            <person name="Nash R.S."/>
            <person name="Weng S."/>
            <person name="Wong E.D."/>
            <person name="Lloyd P."/>
            <person name="Skrzypek M.S."/>
            <person name="Miyasato S.R."/>
            <person name="Simison M."/>
            <person name="Cherry J.M."/>
        </authorList>
    </citation>
    <scope>GENOME REANNOTATION</scope>
    <scope>SEQUENCE REVISION TO 322</scope>
    <source>
        <strain>ATCC 204508 / S288c</strain>
    </source>
</reference>
<reference key="3">
    <citation type="journal article" date="2007" name="Genome Res.">
        <title>Approaching a complete repository of sequence-verified protein-encoding clones for Saccharomyces cerevisiae.</title>
        <authorList>
            <person name="Hu Y."/>
            <person name="Rolfs A."/>
            <person name="Bhullar B."/>
            <person name="Murthy T.V.S."/>
            <person name="Zhu C."/>
            <person name="Berger M.F."/>
            <person name="Camargo A.A."/>
            <person name="Kelley F."/>
            <person name="McCarron S."/>
            <person name="Jepson D."/>
            <person name="Richardson A."/>
            <person name="Raphael J."/>
            <person name="Moreira D."/>
            <person name="Taycher E."/>
            <person name="Zuo D."/>
            <person name="Mohr S."/>
            <person name="Kane M.F."/>
            <person name="Williamson J."/>
            <person name="Simpson A.J.G."/>
            <person name="Bulyk M.L."/>
            <person name="Harlow E."/>
            <person name="Marsischky G."/>
            <person name="Kolodner R.D."/>
            <person name="LaBaer J."/>
        </authorList>
    </citation>
    <scope>NUCLEOTIDE SEQUENCE [GENOMIC DNA]</scope>
    <source>
        <strain>ATCC 204508 / S288c</strain>
    </source>
</reference>
<reference key="4">
    <citation type="journal article" date="2000" name="J. Biol. Chem.">
        <title>Characterization of a (2R,3R)-2,3-butanediol dehydrogenase as the Saccharomyces cerevisiae YAL060W gene product. Disruption and induction of the gene.</title>
        <authorList>
            <person name="Gonzalez E."/>
            <person name="Fernandez M.R."/>
            <person name="Larroy C."/>
            <person name="Sola L."/>
            <person name="Pericas M.A."/>
            <person name="Pares X."/>
            <person name="Biosca J.A."/>
        </authorList>
    </citation>
    <scope>FUNCTION</scope>
    <scope>CATALYTIC ACTIVITY</scope>
    <scope>BIOPHYSICOCHEMICAL PROPERTIES</scope>
    <source>
        <strain>ATCC 90845 / FY834</strain>
    </source>
</reference>
<reference key="5">
    <citation type="journal article" date="2003" name="Nature">
        <title>Global analysis of protein localization in budding yeast.</title>
        <authorList>
            <person name="Huh W.-K."/>
            <person name="Falvo J.V."/>
            <person name="Gerke L.C."/>
            <person name="Carroll A.S."/>
            <person name="Howson R.W."/>
            <person name="Weissman J.S."/>
            <person name="O'Shea E.K."/>
        </authorList>
    </citation>
    <scope>SUBCELLULAR LOCATION [LARGE SCALE ANALYSIS]</scope>
</reference>
<reference key="6">
    <citation type="journal article" date="2003" name="Nature">
        <title>Global analysis of protein expression in yeast.</title>
        <authorList>
            <person name="Ghaemmaghami S."/>
            <person name="Huh W.-K."/>
            <person name="Bower K."/>
            <person name="Howson R.W."/>
            <person name="Belle A."/>
            <person name="Dephoure N."/>
            <person name="O'Shea E.K."/>
            <person name="Weissman J.S."/>
        </authorList>
    </citation>
    <scope>LEVEL OF PROTEIN EXPRESSION [LARGE SCALE ANALYSIS]</scope>
</reference>
<reference key="7">
    <citation type="journal article" date="2009" name="Science">
        <title>Global analysis of Cdk1 substrate phosphorylation sites provides insights into evolution.</title>
        <authorList>
            <person name="Holt L.J."/>
            <person name="Tuch B.B."/>
            <person name="Villen J."/>
            <person name="Johnson A.D."/>
            <person name="Gygi S.P."/>
            <person name="Morgan D.O."/>
        </authorList>
    </citation>
    <scope>PHOSPHORYLATION [LARGE SCALE ANALYSIS] AT SER-63</scope>
    <scope>IDENTIFICATION BY MASS SPECTROMETRY [LARGE SCALE ANALYSIS]</scope>
</reference>
<protein>
    <recommendedName>
        <fullName>(R,R)-butanediol dehydrogenase</fullName>
        <ecNumber>1.1.1.4</ecNumber>
    </recommendedName>
</protein>
<sequence>MRALAYFKKGDIHFTNDIPRPEIQTDDEVIIDVSWCGICGSDLHEYLDGPIFMPKDGECHKLSNAALPLAMGHEMSGIVSKVGPKVTKVKVGDHVVVDAASSCADLHCWPHSKFYNSKPCDACQRGSENLCTHAGFVGLGVISGGFAEQVVVSQHHIIPVPKEIPLDVAALVEPLSVTWHAVKISGFKKGSSALVLGAGPIGLCTILVLKGMGASKIVVSEIAERRIEMAKKLGVEVFNPSKHGHKSIEILRGLTKSHDGFDYSYDCSGIQVTFETSLKALTFKGTATNIAVWGPKPVPFQPMDVTLQEKVMTGSIGYVVEDFEEVVRAIHNGDIAMEDCKQLITGKQRIEDGWEKGFQELMDHKESNVKILLTPNNHGEMK</sequence>
<name>BDH1_YEAST</name>
<comment type="function">
    <text evidence="2">NAD-dependent (R,R)-butanediol dehydrogenase which catalyzes oxidation of (R,R)-butane-2,3-diol to (3R)-acetoin, of meso-butanediol to (3S)-acetoin, and reduction of acetoin. Allows the use of 2,3-butanediol as an aerobic carbon source.</text>
</comment>
<comment type="catalytic activity">
    <reaction evidence="2">
        <text>(R,R)-butane-2,3-diol + NAD(+) = (R)-acetoin + NADH + H(+)</text>
        <dbReference type="Rhea" id="RHEA:24340"/>
        <dbReference type="ChEBI" id="CHEBI:15378"/>
        <dbReference type="ChEBI" id="CHEBI:15686"/>
        <dbReference type="ChEBI" id="CHEBI:16982"/>
        <dbReference type="ChEBI" id="CHEBI:57540"/>
        <dbReference type="ChEBI" id="CHEBI:57945"/>
        <dbReference type="EC" id="1.1.1.4"/>
    </reaction>
</comment>
<comment type="cofactor">
    <cofactor evidence="1">
        <name>Zn(2+)</name>
        <dbReference type="ChEBI" id="CHEBI:29105"/>
    </cofactor>
    <text evidence="1">Binds 2 Zn(2+) ions per subunit.</text>
</comment>
<comment type="biophysicochemical properties">
    <kinetics>
        <KM evidence="2">14 mM for (R,R)-butane-2,3-diol</KM>
        <KM evidence="2">65 mM for meso-butanediol</KM>
        <KM evidence="2">57 mM for 1,2-Butanediol</KM>
        <KM evidence="2">4.5 mM for (3R/3S)-acetoin</KM>
        <KM evidence="2">0.55 mM for NAD</KM>
        <KM evidence="2">0.055 mM for NADH</KM>
    </kinetics>
</comment>
<comment type="subunit">
    <text>Homodimer.</text>
</comment>
<comment type="subcellular location">
    <subcellularLocation>
        <location evidence="3">Cytoplasm</location>
    </subcellularLocation>
</comment>
<comment type="miscellaneous">
    <text evidence="4">Present with 8730 molecules/cell in log phase SD medium.</text>
</comment>
<comment type="similarity">
    <text evidence="5">Belongs to the zinc-containing alcohol dehydrogenase family.</text>
</comment>